<name>RECO_MYCBP</name>
<accession>A1KL52</accession>
<organism>
    <name type="scientific">Mycobacterium bovis (strain BCG / Pasteur 1173P2)</name>
    <dbReference type="NCBI Taxonomy" id="410289"/>
    <lineage>
        <taxon>Bacteria</taxon>
        <taxon>Bacillati</taxon>
        <taxon>Actinomycetota</taxon>
        <taxon>Actinomycetes</taxon>
        <taxon>Mycobacteriales</taxon>
        <taxon>Mycobacteriaceae</taxon>
        <taxon>Mycobacterium</taxon>
        <taxon>Mycobacterium tuberculosis complex</taxon>
    </lineage>
</organism>
<protein>
    <recommendedName>
        <fullName evidence="1">DNA repair protein RecO</fullName>
    </recommendedName>
    <alternativeName>
        <fullName evidence="1">Recombination protein O</fullName>
    </alternativeName>
</protein>
<dbReference type="EMBL" id="AM408590">
    <property type="protein sequence ID" value="CAL72364.1"/>
    <property type="molecule type" value="Genomic_DNA"/>
</dbReference>
<dbReference type="RefSeq" id="WP_003412222.1">
    <property type="nucleotide sequence ID" value="NC_008769.1"/>
</dbReference>
<dbReference type="SMR" id="A1KL52"/>
<dbReference type="GeneID" id="45426349"/>
<dbReference type="KEGG" id="mbb:BCG_2376c"/>
<dbReference type="HOGENOM" id="CLU_066632_1_1_11"/>
<dbReference type="Proteomes" id="UP000001472">
    <property type="component" value="Chromosome"/>
</dbReference>
<dbReference type="GO" id="GO:0043590">
    <property type="term" value="C:bacterial nucleoid"/>
    <property type="evidence" value="ECO:0007669"/>
    <property type="project" value="TreeGrafter"/>
</dbReference>
<dbReference type="GO" id="GO:0006310">
    <property type="term" value="P:DNA recombination"/>
    <property type="evidence" value="ECO:0007669"/>
    <property type="project" value="UniProtKB-UniRule"/>
</dbReference>
<dbReference type="GO" id="GO:0006302">
    <property type="term" value="P:double-strand break repair"/>
    <property type="evidence" value="ECO:0007669"/>
    <property type="project" value="TreeGrafter"/>
</dbReference>
<dbReference type="FunFam" id="1.20.1440.120:FF:000002">
    <property type="entry name" value="DNA repair protein RecO"/>
    <property type="match status" value="1"/>
</dbReference>
<dbReference type="FunFam" id="2.40.50.140:FF:000176">
    <property type="entry name" value="DNA repair protein RecO"/>
    <property type="match status" value="1"/>
</dbReference>
<dbReference type="Gene3D" id="2.40.50.140">
    <property type="entry name" value="Nucleic acid-binding proteins"/>
    <property type="match status" value="1"/>
</dbReference>
<dbReference type="Gene3D" id="1.20.1440.120">
    <property type="entry name" value="Recombination protein O, C-terminal domain"/>
    <property type="match status" value="1"/>
</dbReference>
<dbReference type="HAMAP" id="MF_00201">
    <property type="entry name" value="RecO"/>
    <property type="match status" value="1"/>
</dbReference>
<dbReference type="InterPro" id="IPR037278">
    <property type="entry name" value="ARFGAP/RecO"/>
</dbReference>
<dbReference type="InterPro" id="IPR022572">
    <property type="entry name" value="DNA_rep/recomb_RecO_N"/>
</dbReference>
<dbReference type="InterPro" id="IPR012340">
    <property type="entry name" value="NA-bd_OB-fold"/>
</dbReference>
<dbReference type="InterPro" id="IPR003717">
    <property type="entry name" value="RecO"/>
</dbReference>
<dbReference type="InterPro" id="IPR042242">
    <property type="entry name" value="RecO_C"/>
</dbReference>
<dbReference type="NCBIfam" id="TIGR00613">
    <property type="entry name" value="reco"/>
    <property type="match status" value="1"/>
</dbReference>
<dbReference type="PANTHER" id="PTHR33991">
    <property type="entry name" value="DNA REPAIR PROTEIN RECO"/>
    <property type="match status" value="1"/>
</dbReference>
<dbReference type="PANTHER" id="PTHR33991:SF1">
    <property type="entry name" value="DNA REPAIR PROTEIN RECO"/>
    <property type="match status" value="1"/>
</dbReference>
<dbReference type="Pfam" id="PF02565">
    <property type="entry name" value="RecO_C"/>
    <property type="match status" value="1"/>
</dbReference>
<dbReference type="Pfam" id="PF11967">
    <property type="entry name" value="RecO_N"/>
    <property type="match status" value="1"/>
</dbReference>
<dbReference type="SUPFAM" id="SSF57863">
    <property type="entry name" value="ArfGap/RecO-like zinc finger"/>
    <property type="match status" value="1"/>
</dbReference>
<dbReference type="SUPFAM" id="SSF50249">
    <property type="entry name" value="Nucleic acid-binding proteins"/>
    <property type="match status" value="1"/>
</dbReference>
<gene>
    <name evidence="1" type="primary">recO</name>
    <name type="ordered locus">BCG_2376c</name>
</gene>
<evidence type="ECO:0000255" key="1">
    <source>
        <dbReference type="HAMAP-Rule" id="MF_00201"/>
    </source>
</evidence>
<feature type="chain" id="PRO_1000012139" description="DNA repair protein RecO">
    <location>
        <begin position="1"/>
        <end position="265"/>
    </location>
</feature>
<comment type="function">
    <text evidence="1">Involved in DNA repair and RecF pathway recombination.</text>
</comment>
<comment type="similarity">
    <text evidence="1">Belongs to the RecO family.</text>
</comment>
<sequence length="265" mass="28724">MRLYRDRAVVLRQHKLGEADRIVTLLTRDHGLVRAVAKGVRRTRSKFGARLEPFAHIEVQLHPGRNLDIVTQVVSVDAFATDIVADYGRYTCGCAILETAERLAGEERAPAPALHRLTVGALRAVADGQRPRDLLLDAYLLRAMGIAGWAPALTECARCATPGPHRAFHIATGGSVCAHCRPAGSTTPPLGVVDLMSALYDGDWEAAEAAPQSARSHVSGLVAAHLQWHLERQLKTLPLVERFYQADRSVAERRAALIGQDIAGG</sequence>
<proteinExistence type="inferred from homology"/>
<keyword id="KW-0227">DNA damage</keyword>
<keyword id="KW-0233">DNA recombination</keyword>
<keyword id="KW-0234">DNA repair</keyword>
<reference key="1">
    <citation type="journal article" date="2007" name="Proc. Natl. Acad. Sci. U.S.A.">
        <title>Genome plasticity of BCG and impact on vaccine efficacy.</title>
        <authorList>
            <person name="Brosch R."/>
            <person name="Gordon S.V."/>
            <person name="Garnier T."/>
            <person name="Eiglmeier K."/>
            <person name="Frigui W."/>
            <person name="Valenti P."/>
            <person name="Dos Santos S."/>
            <person name="Duthoy S."/>
            <person name="Lacroix C."/>
            <person name="Garcia-Pelayo C."/>
            <person name="Inwald J.K."/>
            <person name="Golby P."/>
            <person name="Garcia J.N."/>
            <person name="Hewinson R.G."/>
            <person name="Behr M.A."/>
            <person name="Quail M.A."/>
            <person name="Churcher C."/>
            <person name="Barrell B.G."/>
            <person name="Parkhill J."/>
            <person name="Cole S.T."/>
        </authorList>
    </citation>
    <scope>NUCLEOTIDE SEQUENCE [LARGE SCALE GENOMIC DNA]</scope>
    <source>
        <strain>BCG / Pasteur 1173P2</strain>
    </source>
</reference>